<feature type="chain" id="PRO_0000339206" description="Suppressor of tumorigenicity 7 protein">
    <location>
        <begin position="1"/>
        <end position="585"/>
    </location>
</feature>
<feature type="transmembrane region" description="Helical" evidence="2">
    <location>
        <begin position="15"/>
        <end position="35"/>
    </location>
</feature>
<feature type="transmembrane region" description="Helical" evidence="2">
    <location>
        <begin position="62"/>
        <end position="82"/>
    </location>
</feature>
<feature type="transmembrane region" description="Helical" evidence="2">
    <location>
        <begin position="512"/>
        <end position="532"/>
    </location>
</feature>
<feature type="modified residue" description="Phosphoserine" evidence="1">
    <location>
        <position position="386"/>
    </location>
</feature>
<feature type="glycosylation site" description="N-linked (GlcNAc...) asparagine" evidence="2">
    <location>
        <position position="47"/>
    </location>
</feature>
<keyword id="KW-0325">Glycoprotein</keyword>
<keyword id="KW-0472">Membrane</keyword>
<keyword id="KW-0597">Phosphoprotein</keyword>
<keyword id="KW-1185">Reference proteome</keyword>
<keyword id="KW-0812">Transmembrane</keyword>
<keyword id="KW-1133">Transmembrane helix</keyword>
<dbReference type="EMBL" id="DP000022">
    <property type="protein sequence ID" value="ABB89823.1"/>
    <property type="molecule type" value="Genomic_DNA"/>
</dbReference>
<dbReference type="RefSeq" id="XP_012616531.1">
    <property type="nucleotide sequence ID" value="XM_012761077.1"/>
</dbReference>
<dbReference type="SMR" id="Q2QL86"/>
<dbReference type="GlyCosmos" id="Q2QL86">
    <property type="glycosylation" value="1 site, No reported glycans"/>
</dbReference>
<dbReference type="Ensembl" id="ENSMICT00000005738.3">
    <property type="protein sequence ID" value="ENSMICP00000005235.2"/>
    <property type="gene ID" value="ENSMICG00000005741.3"/>
</dbReference>
<dbReference type="GeneID" id="105869362"/>
<dbReference type="KEGG" id="mmur:105869362"/>
<dbReference type="CTD" id="7982"/>
<dbReference type="GeneTree" id="ENSGT00390000000873"/>
<dbReference type="HOGENOM" id="CLU_035578_2_0_1"/>
<dbReference type="OrthoDB" id="5914722at2759"/>
<dbReference type="TreeFam" id="TF314162"/>
<dbReference type="Proteomes" id="UP000694394">
    <property type="component" value="Chromosome 11"/>
</dbReference>
<dbReference type="Bgee" id="ENSMICG00000005741">
    <property type="expression patterns" value="Expressed in cerebellum and 8 other cell types or tissues"/>
</dbReference>
<dbReference type="GO" id="GO:0016020">
    <property type="term" value="C:membrane"/>
    <property type="evidence" value="ECO:0007669"/>
    <property type="project" value="UniProtKB-SubCell"/>
</dbReference>
<dbReference type="CDD" id="cd11557">
    <property type="entry name" value="ST7"/>
    <property type="match status" value="1"/>
</dbReference>
<dbReference type="InterPro" id="IPR007311">
    <property type="entry name" value="ST7"/>
</dbReference>
<dbReference type="PANTHER" id="PTHR12745">
    <property type="entry name" value="SUPPRESSION OF TUMORIGENICITY 7"/>
    <property type="match status" value="1"/>
</dbReference>
<dbReference type="PANTHER" id="PTHR12745:SF10">
    <property type="entry name" value="SUPPRESSOR OF TUMORIGENICITY 7 PROTEIN"/>
    <property type="match status" value="1"/>
</dbReference>
<dbReference type="Pfam" id="PF04184">
    <property type="entry name" value="ST7"/>
    <property type="match status" value="1"/>
</dbReference>
<sequence>MAEAATGFLEQLKSCIVWSWTYLWTVWFFIVLFLVYILRVPLKINDNLSTVSMFLNTLTPKFYVALTGTSSLISGLILIFEWWYFRKYGTSFIEQVSVSHLRPLLGGVDNNSSNNSNSSNGDSDSNRQSVSECKVWRNPLNLFRGAEYNRYTWVTGREPLTYYDMNLSAQDHQTFFTCDSDHLRPADAIMQKAWRERNPQARISAAHEALEINEIRSRVEVPLIASSTIWEIKLLPKCATAYILLAEEEATTIAEAEKLFKQALKAGDGCYRRSQQLQHHGSQYEAQHRRDTNVLVYIKRRLAMCARRLGRTREAVKMMRDLMKEFPLLSMFNIHENLLEALLELQAYADVQAVLAKYDDISLPKSATICYTAALLKARAVSDKFSPEAASRRGLSTAEMNAVEAIHRAVEFNPHVPKYLLEMKSLILPPEHILKRGDSEAIAYAFFHLAHWKRVEGALNLLHCTWEGTFRMIPYPLEKGHLFYPYPICTETADRELLPSFHEVSVYPKKELPFFILFTAGLCSFTAMLALLTHQFPELMGVFAKAMIDIFYSTELRDWNCKSIFMRIEDELEIPPAPQSQHFPN</sequence>
<reference key="1">
    <citation type="submission" date="2006-10" db="EMBL/GenBank/DDBJ databases">
        <title>NISC comparative sequencing initiative.</title>
        <authorList>
            <person name="Antonellis A."/>
            <person name="Ayele K."/>
            <person name="Benjamin B."/>
            <person name="Blakesley R.W."/>
            <person name="Boakye A."/>
            <person name="Bouffard G.G."/>
            <person name="Brinkley C."/>
            <person name="Brooks S."/>
            <person name="Chu G."/>
            <person name="Coleman H."/>
            <person name="Engle J."/>
            <person name="Gestole M."/>
            <person name="Greene A."/>
            <person name="Guan X."/>
            <person name="Gupta J."/>
            <person name="Haghighi P."/>
            <person name="Han J."/>
            <person name="Hansen N."/>
            <person name="Ho S.-L."/>
            <person name="Hu P."/>
            <person name="Hunter G."/>
            <person name="Hurle B."/>
            <person name="Idol J.R."/>
            <person name="Kwong P."/>
            <person name="Laric P."/>
            <person name="Larson S."/>
            <person name="Lee-Lin S.-Q."/>
            <person name="Legaspi R."/>
            <person name="Madden M."/>
            <person name="Maduro Q.L."/>
            <person name="Maduro V.B."/>
            <person name="Margulies E.H."/>
            <person name="Masiello C."/>
            <person name="Maskeri B."/>
            <person name="McDowell J."/>
            <person name="Mojidi H.A."/>
            <person name="Mullikin J.C."/>
            <person name="Oestreicher J.S."/>
            <person name="Park M."/>
            <person name="Portnoy M.E."/>
            <person name="Prasad A."/>
            <person name="Puri O."/>
            <person name="Reddix-Dugue N."/>
            <person name="Schandler K."/>
            <person name="Schueler M.G."/>
            <person name="Sison C."/>
            <person name="Stantripop S."/>
            <person name="Stephen E."/>
            <person name="Taye A."/>
            <person name="Thomas J.W."/>
            <person name="Thomas P.J."/>
            <person name="Tsipouri V."/>
            <person name="Ung L."/>
            <person name="Vogt J.L."/>
            <person name="Wetherby K.D."/>
            <person name="Young A."/>
            <person name="Green E.D."/>
        </authorList>
    </citation>
    <scope>NUCLEOTIDE SEQUENCE [LARGE SCALE GENOMIC DNA]</scope>
</reference>
<name>ST7_MICMU</name>
<protein>
    <recommendedName>
        <fullName>Suppressor of tumorigenicity 7 protein</fullName>
    </recommendedName>
</protein>
<gene>
    <name type="primary">ST7</name>
</gene>
<evidence type="ECO:0000250" key="1">
    <source>
        <dbReference type="UniProtKB" id="Q9NRC1"/>
    </source>
</evidence>
<evidence type="ECO:0000255" key="2"/>
<evidence type="ECO:0000305" key="3"/>
<proteinExistence type="inferred from homology"/>
<accession>Q2QL86</accession>
<comment type="subcellular location">
    <subcellularLocation>
        <location evidence="3">Membrane</location>
        <topology evidence="3">Multi-pass membrane protein</topology>
    </subcellularLocation>
</comment>
<comment type="similarity">
    <text evidence="3">Belongs to the ST7 family.</text>
</comment>
<organism>
    <name type="scientific">Microcebus murinus</name>
    <name type="common">Gray mouse lemur</name>
    <name type="synonym">Lemur murinus</name>
    <dbReference type="NCBI Taxonomy" id="30608"/>
    <lineage>
        <taxon>Eukaryota</taxon>
        <taxon>Metazoa</taxon>
        <taxon>Chordata</taxon>
        <taxon>Craniata</taxon>
        <taxon>Vertebrata</taxon>
        <taxon>Euteleostomi</taxon>
        <taxon>Mammalia</taxon>
        <taxon>Eutheria</taxon>
        <taxon>Euarchontoglires</taxon>
        <taxon>Primates</taxon>
        <taxon>Strepsirrhini</taxon>
        <taxon>Lemuriformes</taxon>
        <taxon>Cheirogaleidae</taxon>
        <taxon>Microcebus</taxon>
    </lineage>
</organism>